<gene>
    <name evidence="1" type="primary">rplL</name>
    <name type="ordered locus">Xfasm12_2197</name>
</gene>
<feature type="chain" id="PRO_1000121510" description="Large ribosomal subunit protein bL12">
    <location>
        <begin position="1"/>
        <end position="122"/>
    </location>
</feature>
<sequence length="122" mass="12756">MSLTNEKIVEAIAEKSIMEVMELVKAIEDRFGVSAAAPVMVSGSAAAAAPVEEQTEFTVTLKEAGAKKVEVIKAVRAVTGLGLKEAKDLTEAGGILKEAVSKEEAEKIKKELEAAGATVEVK</sequence>
<name>RL7_XYLFM</name>
<protein>
    <recommendedName>
        <fullName evidence="1">Large ribosomal subunit protein bL12</fullName>
    </recommendedName>
    <alternativeName>
        <fullName evidence="2">50S ribosomal protein L7/L12</fullName>
    </alternativeName>
</protein>
<proteinExistence type="inferred from homology"/>
<organism>
    <name type="scientific">Xylella fastidiosa (strain M12)</name>
    <dbReference type="NCBI Taxonomy" id="405440"/>
    <lineage>
        <taxon>Bacteria</taxon>
        <taxon>Pseudomonadati</taxon>
        <taxon>Pseudomonadota</taxon>
        <taxon>Gammaproteobacteria</taxon>
        <taxon>Lysobacterales</taxon>
        <taxon>Lysobacteraceae</taxon>
        <taxon>Xylella</taxon>
    </lineage>
</organism>
<keyword id="KW-0687">Ribonucleoprotein</keyword>
<keyword id="KW-0689">Ribosomal protein</keyword>
<reference key="1">
    <citation type="journal article" date="2010" name="J. Bacteriol.">
        <title>Whole genome sequences of two Xylella fastidiosa strains (M12 and M23) causing almond leaf scorch disease in California.</title>
        <authorList>
            <person name="Chen J."/>
            <person name="Xie G."/>
            <person name="Han S."/>
            <person name="Chertkov O."/>
            <person name="Sims D."/>
            <person name="Civerolo E.L."/>
        </authorList>
    </citation>
    <scope>NUCLEOTIDE SEQUENCE [LARGE SCALE GENOMIC DNA]</scope>
    <source>
        <strain>M12</strain>
    </source>
</reference>
<comment type="function">
    <text evidence="1">Forms part of the ribosomal stalk which helps the ribosome interact with GTP-bound translation factors. Is thus essential for accurate translation.</text>
</comment>
<comment type="subunit">
    <text evidence="1">Homodimer. Part of the ribosomal stalk of the 50S ribosomal subunit. Forms a multimeric L10(L12)X complex, where L10 forms an elongated spine to which 2 to 4 L12 dimers bind in a sequential fashion. Binds GTP-bound translation factors.</text>
</comment>
<comment type="similarity">
    <text evidence="1">Belongs to the bacterial ribosomal protein bL12 family.</text>
</comment>
<evidence type="ECO:0000255" key="1">
    <source>
        <dbReference type="HAMAP-Rule" id="MF_00368"/>
    </source>
</evidence>
<evidence type="ECO:0000305" key="2"/>
<dbReference type="EMBL" id="CP000941">
    <property type="protein sequence ID" value="ACA13050.1"/>
    <property type="molecule type" value="Genomic_DNA"/>
</dbReference>
<dbReference type="RefSeq" id="WP_004084690.1">
    <property type="nucleotide sequence ID" value="NC_010513.1"/>
</dbReference>
<dbReference type="SMR" id="B0U5X8"/>
<dbReference type="KEGG" id="xfm:Xfasm12_2197"/>
<dbReference type="HOGENOM" id="CLU_086499_3_2_6"/>
<dbReference type="GO" id="GO:0022625">
    <property type="term" value="C:cytosolic large ribosomal subunit"/>
    <property type="evidence" value="ECO:0007669"/>
    <property type="project" value="TreeGrafter"/>
</dbReference>
<dbReference type="GO" id="GO:0003729">
    <property type="term" value="F:mRNA binding"/>
    <property type="evidence" value="ECO:0007669"/>
    <property type="project" value="TreeGrafter"/>
</dbReference>
<dbReference type="GO" id="GO:0003735">
    <property type="term" value="F:structural constituent of ribosome"/>
    <property type="evidence" value="ECO:0007669"/>
    <property type="project" value="InterPro"/>
</dbReference>
<dbReference type="GO" id="GO:0006412">
    <property type="term" value="P:translation"/>
    <property type="evidence" value="ECO:0007669"/>
    <property type="project" value="UniProtKB-UniRule"/>
</dbReference>
<dbReference type="CDD" id="cd00387">
    <property type="entry name" value="Ribosomal_L7_L12"/>
    <property type="match status" value="1"/>
</dbReference>
<dbReference type="FunFam" id="3.30.1390.10:FF:000001">
    <property type="entry name" value="50S ribosomal protein L7/L12"/>
    <property type="match status" value="1"/>
</dbReference>
<dbReference type="Gene3D" id="3.30.1390.10">
    <property type="match status" value="1"/>
</dbReference>
<dbReference type="Gene3D" id="1.20.5.710">
    <property type="entry name" value="Single helix bin"/>
    <property type="match status" value="1"/>
</dbReference>
<dbReference type="HAMAP" id="MF_00368">
    <property type="entry name" value="Ribosomal_bL12"/>
    <property type="match status" value="1"/>
</dbReference>
<dbReference type="InterPro" id="IPR000206">
    <property type="entry name" value="Ribosomal_bL12"/>
</dbReference>
<dbReference type="InterPro" id="IPR013823">
    <property type="entry name" value="Ribosomal_bL12_C"/>
</dbReference>
<dbReference type="InterPro" id="IPR014719">
    <property type="entry name" value="Ribosomal_bL12_C/ClpS-like"/>
</dbReference>
<dbReference type="InterPro" id="IPR008932">
    <property type="entry name" value="Ribosomal_bL12_oligo"/>
</dbReference>
<dbReference type="InterPro" id="IPR036235">
    <property type="entry name" value="Ribosomal_bL12_oligo_N_sf"/>
</dbReference>
<dbReference type="NCBIfam" id="TIGR00855">
    <property type="entry name" value="L12"/>
    <property type="match status" value="1"/>
</dbReference>
<dbReference type="PANTHER" id="PTHR45987">
    <property type="entry name" value="39S RIBOSOMAL PROTEIN L12"/>
    <property type="match status" value="1"/>
</dbReference>
<dbReference type="PANTHER" id="PTHR45987:SF4">
    <property type="entry name" value="LARGE RIBOSOMAL SUBUNIT PROTEIN BL12M"/>
    <property type="match status" value="1"/>
</dbReference>
<dbReference type="Pfam" id="PF00542">
    <property type="entry name" value="Ribosomal_L12"/>
    <property type="match status" value="1"/>
</dbReference>
<dbReference type="Pfam" id="PF16320">
    <property type="entry name" value="Ribosomal_L12_N"/>
    <property type="match status" value="1"/>
</dbReference>
<dbReference type="SUPFAM" id="SSF54736">
    <property type="entry name" value="ClpS-like"/>
    <property type="match status" value="1"/>
</dbReference>
<dbReference type="SUPFAM" id="SSF48300">
    <property type="entry name" value="Ribosomal protein L7/12, oligomerisation (N-terminal) domain"/>
    <property type="match status" value="1"/>
</dbReference>
<accession>B0U5X8</accession>